<gene>
    <name evidence="1" type="primary">ruvC</name>
    <name type="ordered locus">NMB1419</name>
</gene>
<sequence length="178" mass="18675">MAASVRILGIDPGSRVTGFGVIDVRGRDHFYVASGCIKTPADAPLADRIAVIVRHIGEVVTVYKPQQAAVEQVFVNVNPASTLMLGQARGAALAALVSHKLPVSEYTALQVKQAVVGKGKAAKEQVQHMVVQMLGLSGTPQPDAADGLAVALTHALRNHGLAAKLNPSGMQVKRGRFQ</sequence>
<name>RUVC_NEIMB</name>
<comment type="function">
    <text evidence="1">The RuvA-RuvB-RuvC complex processes Holliday junction (HJ) DNA during genetic recombination and DNA repair. Endonuclease that resolves HJ intermediates. Cleaves cruciform DNA by making single-stranded nicks across the HJ at symmetrical positions within the homologous arms, yielding a 5'-phosphate and a 3'-hydroxyl group; requires a central core of homology in the junction. The consensus cleavage sequence is 5'-(A/T)TT(C/G)-3'. Cleavage occurs on the 3'-side of the TT dinucleotide at the point of strand exchange. HJ branch migration catalyzed by RuvA-RuvB allows RuvC to scan DNA until it finds its consensus sequence, where it cleaves and resolves the cruciform DNA.</text>
</comment>
<comment type="catalytic activity">
    <reaction evidence="1">
        <text>Endonucleolytic cleavage at a junction such as a reciprocal single-stranded crossover between two homologous DNA duplexes (Holliday junction).</text>
        <dbReference type="EC" id="3.1.21.10"/>
    </reaction>
</comment>
<comment type="cofactor">
    <cofactor evidence="1">
        <name>Mg(2+)</name>
        <dbReference type="ChEBI" id="CHEBI:18420"/>
    </cofactor>
    <text evidence="1">Binds 2 Mg(2+) ion per subunit.</text>
</comment>
<comment type="subunit">
    <text evidence="1">Homodimer which binds Holliday junction (HJ) DNA. The HJ becomes 2-fold symmetrical on binding to RuvC with unstacked arms; it has a different conformation from HJ DNA in complex with RuvA. In the full resolvosome a probable DNA-RuvA(4)-RuvB(12)-RuvC(2) complex forms which resolves the HJ.</text>
</comment>
<comment type="subcellular location">
    <subcellularLocation>
        <location evidence="1">Cytoplasm</location>
    </subcellularLocation>
</comment>
<comment type="similarity">
    <text evidence="1">Belongs to the RuvC family.</text>
</comment>
<protein>
    <recommendedName>
        <fullName evidence="1">Crossover junction endodeoxyribonuclease RuvC</fullName>
        <ecNumber evidence="1">3.1.21.10</ecNumber>
    </recommendedName>
    <alternativeName>
        <fullName evidence="1">Holliday junction nuclease RuvC</fullName>
    </alternativeName>
    <alternativeName>
        <fullName evidence="1">Holliday junction resolvase RuvC</fullName>
    </alternativeName>
</protein>
<organism>
    <name type="scientific">Neisseria meningitidis serogroup B (strain ATCC BAA-335 / MC58)</name>
    <dbReference type="NCBI Taxonomy" id="122586"/>
    <lineage>
        <taxon>Bacteria</taxon>
        <taxon>Pseudomonadati</taxon>
        <taxon>Pseudomonadota</taxon>
        <taxon>Betaproteobacteria</taxon>
        <taxon>Neisseriales</taxon>
        <taxon>Neisseriaceae</taxon>
        <taxon>Neisseria</taxon>
    </lineage>
</organism>
<feature type="chain" id="PRO_0000183113" description="Crossover junction endodeoxyribonuclease RuvC">
    <location>
        <begin position="1"/>
        <end position="178"/>
    </location>
</feature>
<feature type="active site" evidence="1">
    <location>
        <position position="11"/>
    </location>
</feature>
<feature type="active site" evidence="1">
    <location>
        <position position="71"/>
    </location>
</feature>
<feature type="active site" evidence="1">
    <location>
        <position position="143"/>
    </location>
</feature>
<feature type="binding site" evidence="1">
    <location>
        <position position="11"/>
    </location>
    <ligand>
        <name>Mg(2+)</name>
        <dbReference type="ChEBI" id="CHEBI:18420"/>
        <label>1</label>
    </ligand>
</feature>
<feature type="binding site" evidence="1">
    <location>
        <position position="71"/>
    </location>
    <ligand>
        <name>Mg(2+)</name>
        <dbReference type="ChEBI" id="CHEBI:18420"/>
        <label>2</label>
    </ligand>
</feature>
<feature type="binding site" evidence="1">
    <location>
        <position position="143"/>
    </location>
    <ligand>
        <name>Mg(2+)</name>
        <dbReference type="ChEBI" id="CHEBI:18420"/>
        <label>1</label>
    </ligand>
</feature>
<reference key="1">
    <citation type="journal article" date="2000" name="Science">
        <title>Complete genome sequence of Neisseria meningitidis serogroup B strain MC58.</title>
        <authorList>
            <person name="Tettelin H."/>
            <person name="Saunders N.J."/>
            <person name="Heidelberg J.F."/>
            <person name="Jeffries A.C."/>
            <person name="Nelson K.E."/>
            <person name="Eisen J.A."/>
            <person name="Ketchum K.A."/>
            <person name="Hood D.W."/>
            <person name="Peden J.F."/>
            <person name="Dodson R.J."/>
            <person name="Nelson W.C."/>
            <person name="Gwinn M.L."/>
            <person name="DeBoy R.T."/>
            <person name="Peterson J.D."/>
            <person name="Hickey E.K."/>
            <person name="Haft D.H."/>
            <person name="Salzberg S.L."/>
            <person name="White O."/>
            <person name="Fleischmann R.D."/>
            <person name="Dougherty B.A."/>
            <person name="Mason T.M."/>
            <person name="Ciecko A."/>
            <person name="Parksey D.S."/>
            <person name="Blair E."/>
            <person name="Cittone H."/>
            <person name="Clark E.B."/>
            <person name="Cotton M.D."/>
            <person name="Utterback T.R."/>
            <person name="Khouri H.M."/>
            <person name="Qin H."/>
            <person name="Vamathevan J.J."/>
            <person name="Gill J."/>
            <person name="Scarlato V."/>
            <person name="Masignani V."/>
            <person name="Pizza M."/>
            <person name="Grandi G."/>
            <person name="Sun L."/>
            <person name="Smith H.O."/>
            <person name="Fraser C.M."/>
            <person name="Moxon E.R."/>
            <person name="Rappuoli R."/>
            <person name="Venter J.C."/>
        </authorList>
    </citation>
    <scope>NUCLEOTIDE SEQUENCE [LARGE SCALE GENOMIC DNA]</scope>
    <source>
        <strain>ATCC BAA-335 / MC58</strain>
    </source>
</reference>
<evidence type="ECO:0000255" key="1">
    <source>
        <dbReference type="HAMAP-Rule" id="MF_00034"/>
    </source>
</evidence>
<proteinExistence type="inferred from homology"/>
<accession>Q9JYV1</accession>
<dbReference type="EC" id="3.1.21.10" evidence="1"/>
<dbReference type="EMBL" id="AE002098">
    <property type="protein sequence ID" value="AAF41780.1"/>
    <property type="molecule type" value="Genomic_DNA"/>
</dbReference>
<dbReference type="PIR" id="E81085">
    <property type="entry name" value="E81085"/>
</dbReference>
<dbReference type="RefSeq" id="NP_274431.1">
    <property type="nucleotide sequence ID" value="NC_003112.2"/>
</dbReference>
<dbReference type="RefSeq" id="WP_002222304.1">
    <property type="nucleotide sequence ID" value="NC_003112.2"/>
</dbReference>
<dbReference type="SMR" id="Q9JYV1"/>
<dbReference type="FunCoup" id="Q9JYV1">
    <property type="interactions" value="195"/>
</dbReference>
<dbReference type="STRING" id="122586.NMB1419"/>
<dbReference type="PaxDb" id="122586-NMB1419"/>
<dbReference type="KEGG" id="nme:NMB1419"/>
<dbReference type="PATRIC" id="fig|122586.8.peg.1774"/>
<dbReference type="HOGENOM" id="CLU_091257_2_0_4"/>
<dbReference type="InParanoid" id="Q9JYV1"/>
<dbReference type="OrthoDB" id="9805499at2"/>
<dbReference type="Proteomes" id="UP000000425">
    <property type="component" value="Chromosome"/>
</dbReference>
<dbReference type="GO" id="GO:0005737">
    <property type="term" value="C:cytoplasm"/>
    <property type="evidence" value="ECO:0007669"/>
    <property type="project" value="UniProtKB-SubCell"/>
</dbReference>
<dbReference type="GO" id="GO:0048476">
    <property type="term" value="C:Holliday junction resolvase complex"/>
    <property type="evidence" value="ECO:0007669"/>
    <property type="project" value="UniProtKB-UniRule"/>
</dbReference>
<dbReference type="GO" id="GO:0008821">
    <property type="term" value="F:crossover junction DNA endonuclease activity"/>
    <property type="evidence" value="ECO:0007669"/>
    <property type="project" value="UniProtKB-UniRule"/>
</dbReference>
<dbReference type="GO" id="GO:0003677">
    <property type="term" value="F:DNA binding"/>
    <property type="evidence" value="ECO:0007669"/>
    <property type="project" value="UniProtKB-KW"/>
</dbReference>
<dbReference type="GO" id="GO:0000287">
    <property type="term" value="F:magnesium ion binding"/>
    <property type="evidence" value="ECO:0007669"/>
    <property type="project" value="UniProtKB-UniRule"/>
</dbReference>
<dbReference type="GO" id="GO:0006310">
    <property type="term" value="P:DNA recombination"/>
    <property type="evidence" value="ECO:0007669"/>
    <property type="project" value="UniProtKB-UniRule"/>
</dbReference>
<dbReference type="GO" id="GO:0006281">
    <property type="term" value="P:DNA repair"/>
    <property type="evidence" value="ECO:0007669"/>
    <property type="project" value="UniProtKB-UniRule"/>
</dbReference>
<dbReference type="CDD" id="cd16962">
    <property type="entry name" value="RuvC"/>
    <property type="match status" value="1"/>
</dbReference>
<dbReference type="FunFam" id="3.30.420.10:FF:000002">
    <property type="entry name" value="Crossover junction endodeoxyribonuclease RuvC"/>
    <property type="match status" value="1"/>
</dbReference>
<dbReference type="Gene3D" id="3.30.420.10">
    <property type="entry name" value="Ribonuclease H-like superfamily/Ribonuclease H"/>
    <property type="match status" value="1"/>
</dbReference>
<dbReference type="HAMAP" id="MF_00034">
    <property type="entry name" value="RuvC"/>
    <property type="match status" value="1"/>
</dbReference>
<dbReference type="InterPro" id="IPR012337">
    <property type="entry name" value="RNaseH-like_sf"/>
</dbReference>
<dbReference type="InterPro" id="IPR036397">
    <property type="entry name" value="RNaseH_sf"/>
</dbReference>
<dbReference type="InterPro" id="IPR020563">
    <property type="entry name" value="X-over_junc_endoDNase_Mg_BS"/>
</dbReference>
<dbReference type="InterPro" id="IPR002176">
    <property type="entry name" value="X-over_junc_endoDNase_RuvC"/>
</dbReference>
<dbReference type="NCBIfam" id="TIGR00228">
    <property type="entry name" value="ruvC"/>
    <property type="match status" value="1"/>
</dbReference>
<dbReference type="PANTHER" id="PTHR30194">
    <property type="entry name" value="CROSSOVER JUNCTION ENDODEOXYRIBONUCLEASE RUVC"/>
    <property type="match status" value="1"/>
</dbReference>
<dbReference type="PANTHER" id="PTHR30194:SF3">
    <property type="entry name" value="CROSSOVER JUNCTION ENDODEOXYRIBONUCLEASE RUVC"/>
    <property type="match status" value="1"/>
</dbReference>
<dbReference type="Pfam" id="PF02075">
    <property type="entry name" value="RuvC"/>
    <property type="match status" value="1"/>
</dbReference>
<dbReference type="PRINTS" id="PR00696">
    <property type="entry name" value="RSOLVASERUVC"/>
</dbReference>
<dbReference type="SUPFAM" id="SSF53098">
    <property type="entry name" value="Ribonuclease H-like"/>
    <property type="match status" value="1"/>
</dbReference>
<dbReference type="PROSITE" id="PS01321">
    <property type="entry name" value="RUVC"/>
    <property type="match status" value="1"/>
</dbReference>
<keyword id="KW-0963">Cytoplasm</keyword>
<keyword id="KW-0227">DNA damage</keyword>
<keyword id="KW-0233">DNA recombination</keyword>
<keyword id="KW-0234">DNA repair</keyword>
<keyword id="KW-0238">DNA-binding</keyword>
<keyword id="KW-0255">Endonuclease</keyword>
<keyword id="KW-0378">Hydrolase</keyword>
<keyword id="KW-0460">Magnesium</keyword>
<keyword id="KW-0479">Metal-binding</keyword>
<keyword id="KW-0540">Nuclease</keyword>
<keyword id="KW-1185">Reference proteome</keyword>